<feature type="chain" id="PRO_1000016600" description="tRNA uridine 5-carboxymethylaminomethyl modification enzyme MnmG">
    <location>
        <begin position="1"/>
        <end position="627"/>
    </location>
</feature>
<feature type="binding site" evidence="1">
    <location>
        <begin position="13"/>
        <end position="18"/>
    </location>
    <ligand>
        <name>FAD</name>
        <dbReference type="ChEBI" id="CHEBI:57692"/>
    </ligand>
</feature>
<feature type="binding site" evidence="1">
    <location>
        <position position="125"/>
    </location>
    <ligand>
        <name>FAD</name>
        <dbReference type="ChEBI" id="CHEBI:57692"/>
    </ligand>
</feature>
<feature type="binding site" evidence="1">
    <location>
        <position position="180"/>
    </location>
    <ligand>
        <name>FAD</name>
        <dbReference type="ChEBI" id="CHEBI:57692"/>
    </ligand>
</feature>
<feature type="binding site" evidence="1">
    <location>
        <begin position="274"/>
        <end position="288"/>
    </location>
    <ligand>
        <name>NAD(+)</name>
        <dbReference type="ChEBI" id="CHEBI:57540"/>
    </ligand>
</feature>
<feature type="binding site" evidence="1">
    <location>
        <position position="371"/>
    </location>
    <ligand>
        <name>FAD</name>
        <dbReference type="ChEBI" id="CHEBI:57692"/>
    </ligand>
</feature>
<sequence length="627" mass="69749">MIYDYGYDVIVVGGGHAGVEAASASARIGAKTLLLTHNIDTIGQMSCNPAIGGIGKGHLVKEIDAMGGVMAKAIDMAGIQFRILNSRKGPAVRATRAQADRVLYKKAINSLINNQENLDIFQDSVDDLVVENNTVCGAITKTGITFRAKKVVLTVGTFLGGKIHIGKVSNAGGRAGDQPSNALAARLRSLPFRVDRLKTGTPPRIDRRSVDFSVMEVQHGDNPTPYFSFFSKGKIEHPRQIPCYITYTNNETHKIITDNLDKSAMYSGLIEGIGPRYCPSIEDKVVRFADKERHQIFVEPEGLNSIELYPNGLSTSLPFEVQCNYIRSIKGFEKAFIMRPGYAIEYDFFDPRDLKPTLETKHIKNLYFAGQINGTTGYEEAGAQGLVAGINAAISIDSDKSWYPTRADSYIGVLIDDLITKGTKEPYRMFTSRAEYRLILREDNADLRLSDKACELGLLSKEDQQHFISKKNAIIENIAMMKNTWIGPQTQKARDLEKFLDKKMTRESTLFDLLKRPEIDYSKLQQISELNLNLQDEAVIEQIEISAKYSGYIERQNKDIEKTATLEQKAIPTDFNYSQVKGLSNEVLQKLTEQKPTTLGEASRIPGITPAAISLLTIYMKKTGFIK</sequence>
<gene>
    <name evidence="1" type="primary">mnmG</name>
    <name evidence="1" type="synonym">gidA</name>
    <name type="ordered locus">FTN_1182</name>
</gene>
<organism>
    <name type="scientific">Francisella tularensis subsp. novicida (strain U112)</name>
    <dbReference type="NCBI Taxonomy" id="401614"/>
    <lineage>
        <taxon>Bacteria</taxon>
        <taxon>Pseudomonadati</taxon>
        <taxon>Pseudomonadota</taxon>
        <taxon>Gammaproteobacteria</taxon>
        <taxon>Thiotrichales</taxon>
        <taxon>Francisellaceae</taxon>
        <taxon>Francisella</taxon>
    </lineage>
</organism>
<dbReference type="EMBL" id="CP000439">
    <property type="protein sequence ID" value="ABK90068.1"/>
    <property type="molecule type" value="Genomic_DNA"/>
</dbReference>
<dbReference type="RefSeq" id="WP_003039882.1">
    <property type="nucleotide sequence ID" value="NZ_CP009633.1"/>
</dbReference>
<dbReference type="SMR" id="A0Q753"/>
<dbReference type="GeneID" id="75265087"/>
<dbReference type="KEGG" id="ftn:FTN_1182"/>
<dbReference type="KEGG" id="ftx:AW25_825"/>
<dbReference type="BioCyc" id="FTUL401614:G1G75-1225-MONOMER"/>
<dbReference type="Proteomes" id="UP000000762">
    <property type="component" value="Chromosome"/>
</dbReference>
<dbReference type="GO" id="GO:0005829">
    <property type="term" value="C:cytosol"/>
    <property type="evidence" value="ECO:0007669"/>
    <property type="project" value="TreeGrafter"/>
</dbReference>
<dbReference type="GO" id="GO:0050660">
    <property type="term" value="F:flavin adenine dinucleotide binding"/>
    <property type="evidence" value="ECO:0007669"/>
    <property type="project" value="UniProtKB-UniRule"/>
</dbReference>
<dbReference type="GO" id="GO:0030488">
    <property type="term" value="P:tRNA methylation"/>
    <property type="evidence" value="ECO:0007669"/>
    <property type="project" value="TreeGrafter"/>
</dbReference>
<dbReference type="GO" id="GO:0002098">
    <property type="term" value="P:tRNA wobble uridine modification"/>
    <property type="evidence" value="ECO:0007669"/>
    <property type="project" value="InterPro"/>
</dbReference>
<dbReference type="FunFam" id="1.10.10.1800:FF:000001">
    <property type="entry name" value="tRNA uridine 5-carboxymethylaminomethyl modification enzyme MnmG"/>
    <property type="match status" value="1"/>
</dbReference>
<dbReference type="FunFam" id="1.10.150.570:FF:000001">
    <property type="entry name" value="tRNA uridine 5-carboxymethylaminomethyl modification enzyme MnmG"/>
    <property type="match status" value="1"/>
</dbReference>
<dbReference type="FunFam" id="3.50.50.60:FF:000002">
    <property type="entry name" value="tRNA uridine 5-carboxymethylaminomethyl modification enzyme MnmG"/>
    <property type="match status" value="1"/>
</dbReference>
<dbReference type="FunFam" id="3.50.50.60:FF:000010">
    <property type="entry name" value="tRNA uridine 5-carboxymethylaminomethyl modification enzyme MnmG"/>
    <property type="match status" value="1"/>
</dbReference>
<dbReference type="Gene3D" id="3.50.50.60">
    <property type="entry name" value="FAD/NAD(P)-binding domain"/>
    <property type="match status" value="2"/>
</dbReference>
<dbReference type="Gene3D" id="1.10.150.570">
    <property type="entry name" value="GidA associated domain, C-terminal subdomain"/>
    <property type="match status" value="1"/>
</dbReference>
<dbReference type="Gene3D" id="1.10.10.1800">
    <property type="entry name" value="tRNA uridine 5-carboxymethylaminomethyl modification enzyme MnmG/GidA"/>
    <property type="match status" value="1"/>
</dbReference>
<dbReference type="HAMAP" id="MF_00129">
    <property type="entry name" value="MnmG_GidA"/>
    <property type="match status" value="1"/>
</dbReference>
<dbReference type="InterPro" id="IPR036188">
    <property type="entry name" value="FAD/NAD-bd_sf"/>
</dbReference>
<dbReference type="InterPro" id="IPR049312">
    <property type="entry name" value="GIDA_C_N"/>
</dbReference>
<dbReference type="InterPro" id="IPR004416">
    <property type="entry name" value="MnmG"/>
</dbReference>
<dbReference type="InterPro" id="IPR002218">
    <property type="entry name" value="MnmG-rel"/>
</dbReference>
<dbReference type="InterPro" id="IPR020595">
    <property type="entry name" value="MnmG-rel_CS"/>
</dbReference>
<dbReference type="InterPro" id="IPR026904">
    <property type="entry name" value="MnmG_C"/>
</dbReference>
<dbReference type="InterPro" id="IPR047001">
    <property type="entry name" value="MnmG_C_subdom"/>
</dbReference>
<dbReference type="InterPro" id="IPR044920">
    <property type="entry name" value="MnmG_C_subdom_sf"/>
</dbReference>
<dbReference type="InterPro" id="IPR040131">
    <property type="entry name" value="MnmG_N"/>
</dbReference>
<dbReference type="NCBIfam" id="TIGR00136">
    <property type="entry name" value="mnmG_gidA"/>
    <property type="match status" value="1"/>
</dbReference>
<dbReference type="PANTHER" id="PTHR11806">
    <property type="entry name" value="GLUCOSE INHIBITED DIVISION PROTEIN A"/>
    <property type="match status" value="1"/>
</dbReference>
<dbReference type="PANTHER" id="PTHR11806:SF0">
    <property type="entry name" value="PROTEIN MTO1 HOMOLOG, MITOCHONDRIAL"/>
    <property type="match status" value="1"/>
</dbReference>
<dbReference type="Pfam" id="PF01134">
    <property type="entry name" value="GIDA"/>
    <property type="match status" value="1"/>
</dbReference>
<dbReference type="Pfam" id="PF21680">
    <property type="entry name" value="GIDA_C_1st"/>
    <property type="match status" value="1"/>
</dbReference>
<dbReference type="Pfam" id="PF13932">
    <property type="entry name" value="SAM_GIDA_C"/>
    <property type="match status" value="1"/>
</dbReference>
<dbReference type="SMART" id="SM01228">
    <property type="entry name" value="GIDA_assoc_3"/>
    <property type="match status" value="1"/>
</dbReference>
<dbReference type="SUPFAM" id="SSF51905">
    <property type="entry name" value="FAD/NAD(P)-binding domain"/>
    <property type="match status" value="1"/>
</dbReference>
<dbReference type="PROSITE" id="PS01280">
    <property type="entry name" value="GIDA_1"/>
    <property type="match status" value="1"/>
</dbReference>
<dbReference type="PROSITE" id="PS01281">
    <property type="entry name" value="GIDA_2"/>
    <property type="match status" value="1"/>
</dbReference>
<protein>
    <recommendedName>
        <fullName evidence="1">tRNA uridine 5-carboxymethylaminomethyl modification enzyme MnmG</fullName>
    </recommendedName>
    <alternativeName>
        <fullName evidence="1">Glucose-inhibited division protein A</fullName>
    </alternativeName>
</protein>
<comment type="function">
    <text evidence="1">NAD-binding protein involved in the addition of a carboxymethylaminomethyl (cmnm) group at the wobble position (U34) of certain tRNAs, forming tRNA-cmnm(5)s(2)U34.</text>
</comment>
<comment type="cofactor">
    <cofactor evidence="1">
        <name>FAD</name>
        <dbReference type="ChEBI" id="CHEBI:57692"/>
    </cofactor>
</comment>
<comment type="subunit">
    <text evidence="1">Homodimer. Heterotetramer of two MnmE and two MnmG subunits.</text>
</comment>
<comment type="subcellular location">
    <subcellularLocation>
        <location evidence="1">Cytoplasm</location>
    </subcellularLocation>
</comment>
<comment type="similarity">
    <text evidence="1">Belongs to the MnmG family.</text>
</comment>
<accession>A0Q753</accession>
<reference key="1">
    <citation type="journal article" date="2007" name="Genome Biol.">
        <title>Comparison of Francisella tularensis genomes reveals evolutionary events associated with the emergence of human pathogenic strains.</title>
        <authorList>
            <person name="Rohmer L."/>
            <person name="Fong C."/>
            <person name="Abmayr S."/>
            <person name="Wasnick M."/>
            <person name="Larson Freeman T.J."/>
            <person name="Radey M."/>
            <person name="Guina T."/>
            <person name="Svensson K."/>
            <person name="Hayden H.S."/>
            <person name="Jacobs M."/>
            <person name="Gallagher L.A."/>
            <person name="Manoil C."/>
            <person name="Ernst R.K."/>
            <person name="Drees B."/>
            <person name="Buckley D."/>
            <person name="Haugen E."/>
            <person name="Bovee D."/>
            <person name="Zhou Y."/>
            <person name="Chang J."/>
            <person name="Levy R."/>
            <person name="Lim R."/>
            <person name="Gillett W."/>
            <person name="Guenthener D."/>
            <person name="Kang A."/>
            <person name="Shaffer S.A."/>
            <person name="Taylor G."/>
            <person name="Chen J."/>
            <person name="Gallis B."/>
            <person name="D'Argenio D.A."/>
            <person name="Forsman M."/>
            <person name="Olson M.V."/>
            <person name="Goodlett D.R."/>
            <person name="Kaul R."/>
            <person name="Miller S.I."/>
            <person name="Brittnacher M.J."/>
        </authorList>
    </citation>
    <scope>NUCLEOTIDE SEQUENCE [LARGE SCALE GENOMIC DNA]</scope>
    <source>
        <strain>U112</strain>
    </source>
</reference>
<name>MNMG_FRATN</name>
<proteinExistence type="inferred from homology"/>
<evidence type="ECO:0000255" key="1">
    <source>
        <dbReference type="HAMAP-Rule" id="MF_00129"/>
    </source>
</evidence>
<keyword id="KW-0963">Cytoplasm</keyword>
<keyword id="KW-0274">FAD</keyword>
<keyword id="KW-0285">Flavoprotein</keyword>
<keyword id="KW-0520">NAD</keyword>
<keyword id="KW-0819">tRNA processing</keyword>